<sequence>MTQTVPYRCGRIAVIGRPNVGKSTLTNALVGTKISIVSNRPQTTRHRLLGIATFPEGQIILVDTPGLHREQKHPMNRLMNRTARGSLEDVDAALLVTESTHWNEEDTLAYNLLNDTGIPVVLVINKIDRFKDKSALLPFLTHINENHTFATIHPVSALKRKGLKTLVSDLLALLPEGGPMFSEDEITDRSQRFLASELVREQVMRQLGKELPYATTVEIEYFTENTGLFRIGALIWVERESQKAIVIGKGGVRLKEIGVKARQQMERLFQTKVFLETWVRVRKDWSNNEAALKTFGYE</sequence>
<reference key="1">
    <citation type="journal article" date="2003" name="J. Bacteriol.">
        <title>Comparative analyses of the complete genome sequences of Pierce's disease and citrus variegated chlorosis strains of Xylella fastidiosa.</title>
        <authorList>
            <person name="Van Sluys M.A."/>
            <person name="de Oliveira M.C."/>
            <person name="Monteiro-Vitorello C.B."/>
            <person name="Miyaki C.Y."/>
            <person name="Furlan L.R."/>
            <person name="Camargo L.E.A."/>
            <person name="da Silva A.C.R."/>
            <person name="Moon D.H."/>
            <person name="Takita M.A."/>
            <person name="Lemos E.G.M."/>
            <person name="Machado M.A."/>
            <person name="Ferro M.I.T."/>
            <person name="da Silva F.R."/>
            <person name="Goldman M.H.S."/>
            <person name="Goldman G.H."/>
            <person name="Lemos M.V.F."/>
            <person name="El-Dorry H."/>
            <person name="Tsai S.M."/>
            <person name="Carrer H."/>
            <person name="Carraro D.M."/>
            <person name="de Oliveira R.C."/>
            <person name="Nunes L.R."/>
            <person name="Siqueira W.J."/>
            <person name="Coutinho L.L."/>
            <person name="Kimura E.T."/>
            <person name="Ferro E.S."/>
            <person name="Harakava R."/>
            <person name="Kuramae E.E."/>
            <person name="Marino C.L."/>
            <person name="Giglioti E."/>
            <person name="Abreu I.L."/>
            <person name="Alves L.M.C."/>
            <person name="do Amaral A.M."/>
            <person name="Baia G.S."/>
            <person name="Blanco S.R."/>
            <person name="Brito M.S."/>
            <person name="Cannavan F.S."/>
            <person name="Celestino A.V."/>
            <person name="da Cunha A.F."/>
            <person name="Fenille R.C."/>
            <person name="Ferro J.A."/>
            <person name="Formighieri E.F."/>
            <person name="Kishi L.T."/>
            <person name="Leoni S.G."/>
            <person name="Oliveira A.R."/>
            <person name="Rosa V.E. Jr."/>
            <person name="Sassaki F.T."/>
            <person name="Sena J.A.D."/>
            <person name="de Souza A.A."/>
            <person name="Truffi D."/>
            <person name="Tsukumo F."/>
            <person name="Yanai G.M."/>
            <person name="Zaros L.G."/>
            <person name="Civerolo E.L."/>
            <person name="Simpson A.J.G."/>
            <person name="Almeida N.F. Jr."/>
            <person name="Setubal J.C."/>
            <person name="Kitajima J.P."/>
        </authorList>
    </citation>
    <scope>NUCLEOTIDE SEQUENCE [LARGE SCALE GENOMIC DNA]</scope>
    <source>
        <strain>Temecula1 / ATCC 700964</strain>
    </source>
</reference>
<organism>
    <name type="scientific">Xylella fastidiosa (strain Temecula1 / ATCC 700964)</name>
    <dbReference type="NCBI Taxonomy" id="183190"/>
    <lineage>
        <taxon>Bacteria</taxon>
        <taxon>Pseudomonadati</taxon>
        <taxon>Pseudomonadota</taxon>
        <taxon>Gammaproteobacteria</taxon>
        <taxon>Lysobacterales</taxon>
        <taxon>Lysobacteraceae</taxon>
        <taxon>Xylella</taxon>
    </lineage>
</organism>
<name>ERA_XYLFT</name>
<proteinExistence type="inferred from homology"/>
<gene>
    <name evidence="1" type="primary">era</name>
    <name type="ordered locus">PD_1291</name>
</gene>
<dbReference type="EMBL" id="AE009442">
    <property type="protein sequence ID" value="AAO29140.1"/>
    <property type="molecule type" value="Genomic_DNA"/>
</dbReference>
<dbReference type="RefSeq" id="WP_011098038.1">
    <property type="nucleotide sequence ID" value="NC_004556.1"/>
</dbReference>
<dbReference type="SMR" id="Q87C05"/>
<dbReference type="GeneID" id="93905105"/>
<dbReference type="KEGG" id="xft:PD_1291"/>
<dbReference type="HOGENOM" id="CLU_038009_1_2_6"/>
<dbReference type="Proteomes" id="UP000002516">
    <property type="component" value="Chromosome"/>
</dbReference>
<dbReference type="GO" id="GO:0005829">
    <property type="term" value="C:cytosol"/>
    <property type="evidence" value="ECO:0007669"/>
    <property type="project" value="TreeGrafter"/>
</dbReference>
<dbReference type="GO" id="GO:0005886">
    <property type="term" value="C:plasma membrane"/>
    <property type="evidence" value="ECO:0007669"/>
    <property type="project" value="UniProtKB-SubCell"/>
</dbReference>
<dbReference type="GO" id="GO:0005525">
    <property type="term" value="F:GTP binding"/>
    <property type="evidence" value="ECO:0007669"/>
    <property type="project" value="UniProtKB-UniRule"/>
</dbReference>
<dbReference type="GO" id="GO:0003924">
    <property type="term" value="F:GTPase activity"/>
    <property type="evidence" value="ECO:0007669"/>
    <property type="project" value="UniProtKB-UniRule"/>
</dbReference>
<dbReference type="GO" id="GO:0043024">
    <property type="term" value="F:ribosomal small subunit binding"/>
    <property type="evidence" value="ECO:0007669"/>
    <property type="project" value="TreeGrafter"/>
</dbReference>
<dbReference type="GO" id="GO:0070181">
    <property type="term" value="F:small ribosomal subunit rRNA binding"/>
    <property type="evidence" value="ECO:0007669"/>
    <property type="project" value="UniProtKB-UniRule"/>
</dbReference>
<dbReference type="GO" id="GO:0000028">
    <property type="term" value="P:ribosomal small subunit assembly"/>
    <property type="evidence" value="ECO:0007669"/>
    <property type="project" value="TreeGrafter"/>
</dbReference>
<dbReference type="CDD" id="cd04163">
    <property type="entry name" value="Era"/>
    <property type="match status" value="1"/>
</dbReference>
<dbReference type="CDD" id="cd22534">
    <property type="entry name" value="KH-II_Era"/>
    <property type="match status" value="1"/>
</dbReference>
<dbReference type="FunFam" id="3.30.300.20:FF:000003">
    <property type="entry name" value="GTPase Era"/>
    <property type="match status" value="1"/>
</dbReference>
<dbReference type="Gene3D" id="3.30.300.20">
    <property type="match status" value="1"/>
</dbReference>
<dbReference type="Gene3D" id="3.40.50.300">
    <property type="entry name" value="P-loop containing nucleotide triphosphate hydrolases"/>
    <property type="match status" value="1"/>
</dbReference>
<dbReference type="HAMAP" id="MF_00367">
    <property type="entry name" value="GTPase_Era"/>
    <property type="match status" value="1"/>
</dbReference>
<dbReference type="InterPro" id="IPR030388">
    <property type="entry name" value="G_ERA_dom"/>
</dbReference>
<dbReference type="InterPro" id="IPR006073">
    <property type="entry name" value="GTP-bd"/>
</dbReference>
<dbReference type="InterPro" id="IPR005662">
    <property type="entry name" value="GTPase_Era-like"/>
</dbReference>
<dbReference type="InterPro" id="IPR015946">
    <property type="entry name" value="KH_dom-like_a/b"/>
</dbReference>
<dbReference type="InterPro" id="IPR004044">
    <property type="entry name" value="KH_dom_type_2"/>
</dbReference>
<dbReference type="InterPro" id="IPR009019">
    <property type="entry name" value="KH_sf_prok-type"/>
</dbReference>
<dbReference type="InterPro" id="IPR027417">
    <property type="entry name" value="P-loop_NTPase"/>
</dbReference>
<dbReference type="InterPro" id="IPR005225">
    <property type="entry name" value="Small_GTP-bd"/>
</dbReference>
<dbReference type="NCBIfam" id="TIGR00436">
    <property type="entry name" value="era"/>
    <property type="match status" value="1"/>
</dbReference>
<dbReference type="NCBIfam" id="NF000908">
    <property type="entry name" value="PRK00089.1"/>
    <property type="match status" value="1"/>
</dbReference>
<dbReference type="NCBIfam" id="TIGR00231">
    <property type="entry name" value="small_GTP"/>
    <property type="match status" value="1"/>
</dbReference>
<dbReference type="PANTHER" id="PTHR42698">
    <property type="entry name" value="GTPASE ERA"/>
    <property type="match status" value="1"/>
</dbReference>
<dbReference type="PANTHER" id="PTHR42698:SF1">
    <property type="entry name" value="GTPASE ERA, MITOCHONDRIAL"/>
    <property type="match status" value="1"/>
</dbReference>
<dbReference type="Pfam" id="PF07650">
    <property type="entry name" value="KH_2"/>
    <property type="match status" value="1"/>
</dbReference>
<dbReference type="Pfam" id="PF01926">
    <property type="entry name" value="MMR_HSR1"/>
    <property type="match status" value="1"/>
</dbReference>
<dbReference type="PRINTS" id="PR00326">
    <property type="entry name" value="GTP1OBG"/>
</dbReference>
<dbReference type="SUPFAM" id="SSF52540">
    <property type="entry name" value="P-loop containing nucleoside triphosphate hydrolases"/>
    <property type="match status" value="1"/>
</dbReference>
<dbReference type="SUPFAM" id="SSF54814">
    <property type="entry name" value="Prokaryotic type KH domain (KH-domain type II)"/>
    <property type="match status" value="1"/>
</dbReference>
<dbReference type="PROSITE" id="PS51713">
    <property type="entry name" value="G_ERA"/>
    <property type="match status" value="1"/>
</dbReference>
<dbReference type="PROSITE" id="PS50823">
    <property type="entry name" value="KH_TYPE_2"/>
    <property type="match status" value="1"/>
</dbReference>
<accession>Q87C05</accession>
<feature type="chain" id="PRO_0000180077" description="GTPase Era">
    <location>
        <begin position="1"/>
        <end position="298"/>
    </location>
</feature>
<feature type="domain" description="Era-type G" evidence="2">
    <location>
        <begin position="8"/>
        <end position="176"/>
    </location>
</feature>
<feature type="domain" description="KH type-2" evidence="1">
    <location>
        <begin position="199"/>
        <end position="283"/>
    </location>
</feature>
<feature type="region of interest" description="G1" evidence="2">
    <location>
        <begin position="16"/>
        <end position="23"/>
    </location>
</feature>
<feature type="region of interest" description="G2" evidence="2">
    <location>
        <begin position="42"/>
        <end position="46"/>
    </location>
</feature>
<feature type="region of interest" description="G3" evidence="2">
    <location>
        <begin position="63"/>
        <end position="66"/>
    </location>
</feature>
<feature type="region of interest" description="G4" evidence="2">
    <location>
        <begin position="125"/>
        <end position="128"/>
    </location>
</feature>
<feature type="region of interest" description="G5" evidence="2">
    <location>
        <begin position="155"/>
        <end position="157"/>
    </location>
</feature>
<feature type="binding site" evidence="1">
    <location>
        <begin position="16"/>
        <end position="23"/>
    </location>
    <ligand>
        <name>GTP</name>
        <dbReference type="ChEBI" id="CHEBI:37565"/>
    </ligand>
</feature>
<feature type="binding site" evidence="1">
    <location>
        <begin position="63"/>
        <end position="67"/>
    </location>
    <ligand>
        <name>GTP</name>
        <dbReference type="ChEBI" id="CHEBI:37565"/>
    </ligand>
</feature>
<feature type="binding site" evidence="1">
    <location>
        <begin position="125"/>
        <end position="128"/>
    </location>
    <ligand>
        <name>GTP</name>
        <dbReference type="ChEBI" id="CHEBI:37565"/>
    </ligand>
</feature>
<protein>
    <recommendedName>
        <fullName evidence="1">GTPase Era</fullName>
    </recommendedName>
</protein>
<comment type="function">
    <text evidence="1">An essential GTPase that binds both GDP and GTP, with rapid nucleotide exchange. Plays a role in 16S rRNA processing and 30S ribosomal subunit biogenesis and possibly also in cell cycle regulation and energy metabolism.</text>
</comment>
<comment type="subunit">
    <text evidence="1">Monomer.</text>
</comment>
<comment type="subcellular location">
    <subcellularLocation>
        <location>Cytoplasm</location>
    </subcellularLocation>
    <subcellularLocation>
        <location evidence="1">Cell inner membrane</location>
        <topology evidence="1">Peripheral membrane protein</topology>
    </subcellularLocation>
</comment>
<comment type="similarity">
    <text evidence="1 2">Belongs to the TRAFAC class TrmE-Era-EngA-EngB-Septin-like GTPase superfamily. Era GTPase family.</text>
</comment>
<evidence type="ECO:0000255" key="1">
    <source>
        <dbReference type="HAMAP-Rule" id="MF_00367"/>
    </source>
</evidence>
<evidence type="ECO:0000255" key="2">
    <source>
        <dbReference type="PROSITE-ProRule" id="PRU01050"/>
    </source>
</evidence>
<keyword id="KW-0997">Cell inner membrane</keyword>
<keyword id="KW-1003">Cell membrane</keyword>
<keyword id="KW-0963">Cytoplasm</keyword>
<keyword id="KW-0342">GTP-binding</keyword>
<keyword id="KW-0472">Membrane</keyword>
<keyword id="KW-0547">Nucleotide-binding</keyword>
<keyword id="KW-1185">Reference proteome</keyword>
<keyword id="KW-0690">Ribosome biogenesis</keyword>
<keyword id="KW-0694">RNA-binding</keyword>
<keyword id="KW-0699">rRNA-binding</keyword>